<keyword id="KW-0067">ATP-binding</keyword>
<keyword id="KW-0963">Cytoplasm</keyword>
<keyword id="KW-0275">Fatty acid biosynthesis</keyword>
<keyword id="KW-0276">Fatty acid metabolism</keyword>
<keyword id="KW-0444">Lipid biosynthesis</keyword>
<keyword id="KW-0443">Lipid metabolism</keyword>
<keyword id="KW-0547">Nucleotide-binding</keyword>
<keyword id="KW-0808">Transferase</keyword>
<organism>
    <name type="scientific">Xanthomonas axonopodis pv. citri (strain 306)</name>
    <dbReference type="NCBI Taxonomy" id="190486"/>
    <lineage>
        <taxon>Bacteria</taxon>
        <taxon>Pseudomonadati</taxon>
        <taxon>Pseudomonadota</taxon>
        <taxon>Gammaproteobacteria</taxon>
        <taxon>Lysobacterales</taxon>
        <taxon>Lysobacteraceae</taxon>
        <taxon>Xanthomonas</taxon>
    </lineage>
</organism>
<protein>
    <recommendedName>
        <fullName evidence="1">Acetyl-coenzyme A carboxylase carboxyl transferase subunit alpha</fullName>
        <shortName evidence="1">ACCase subunit alpha</shortName>
        <shortName evidence="1">Acetyl-CoA carboxylase carboxyltransferase subunit alpha</shortName>
        <ecNumber evidence="1">2.1.3.15</ecNumber>
    </recommendedName>
</protein>
<name>ACCA_XANAC</name>
<reference key="1">
    <citation type="journal article" date="2002" name="Nature">
        <title>Comparison of the genomes of two Xanthomonas pathogens with differing host specificities.</title>
        <authorList>
            <person name="da Silva A.C.R."/>
            <person name="Ferro J.A."/>
            <person name="Reinach F.C."/>
            <person name="Farah C.S."/>
            <person name="Furlan L.R."/>
            <person name="Quaggio R.B."/>
            <person name="Monteiro-Vitorello C.B."/>
            <person name="Van Sluys M.A."/>
            <person name="Almeida N.F. Jr."/>
            <person name="Alves L.M.C."/>
            <person name="do Amaral A.M."/>
            <person name="Bertolini M.C."/>
            <person name="Camargo L.E.A."/>
            <person name="Camarotte G."/>
            <person name="Cannavan F."/>
            <person name="Cardozo J."/>
            <person name="Chambergo F."/>
            <person name="Ciapina L.P."/>
            <person name="Cicarelli R.M.B."/>
            <person name="Coutinho L.L."/>
            <person name="Cursino-Santos J.R."/>
            <person name="El-Dorry H."/>
            <person name="Faria J.B."/>
            <person name="Ferreira A.J.S."/>
            <person name="Ferreira R.C.C."/>
            <person name="Ferro M.I.T."/>
            <person name="Formighieri E.F."/>
            <person name="Franco M.C."/>
            <person name="Greggio C.C."/>
            <person name="Gruber A."/>
            <person name="Katsuyama A.M."/>
            <person name="Kishi L.T."/>
            <person name="Leite R.P."/>
            <person name="Lemos E.G.M."/>
            <person name="Lemos M.V.F."/>
            <person name="Locali E.C."/>
            <person name="Machado M.A."/>
            <person name="Madeira A.M.B.N."/>
            <person name="Martinez-Rossi N.M."/>
            <person name="Martins E.C."/>
            <person name="Meidanis J."/>
            <person name="Menck C.F.M."/>
            <person name="Miyaki C.Y."/>
            <person name="Moon D.H."/>
            <person name="Moreira L.M."/>
            <person name="Novo M.T.M."/>
            <person name="Okura V.K."/>
            <person name="Oliveira M.C."/>
            <person name="Oliveira V.R."/>
            <person name="Pereira H.A."/>
            <person name="Rossi A."/>
            <person name="Sena J.A.D."/>
            <person name="Silva C."/>
            <person name="de Souza R.F."/>
            <person name="Spinola L.A.F."/>
            <person name="Takita M.A."/>
            <person name="Tamura R.E."/>
            <person name="Teixeira E.C."/>
            <person name="Tezza R.I.D."/>
            <person name="Trindade dos Santos M."/>
            <person name="Truffi D."/>
            <person name="Tsai S.M."/>
            <person name="White F.F."/>
            <person name="Setubal J.C."/>
            <person name="Kitajima J.P."/>
        </authorList>
    </citation>
    <scope>NUCLEOTIDE SEQUENCE [LARGE SCALE GENOMIC DNA]</scope>
    <source>
        <strain>306</strain>
    </source>
</reference>
<dbReference type="EC" id="2.1.3.15" evidence="1"/>
<dbReference type="EMBL" id="AE008923">
    <property type="protein sequence ID" value="AAM36276.1"/>
    <property type="molecule type" value="Genomic_DNA"/>
</dbReference>
<dbReference type="RefSeq" id="WP_003485388.1">
    <property type="nucleotide sequence ID" value="NC_003919.1"/>
</dbReference>
<dbReference type="SMR" id="Q8PMM1"/>
<dbReference type="KEGG" id="xac:XAC1405"/>
<dbReference type="eggNOG" id="COG0825">
    <property type="taxonomic scope" value="Bacteria"/>
</dbReference>
<dbReference type="HOGENOM" id="CLU_015486_0_2_6"/>
<dbReference type="UniPathway" id="UPA00655">
    <property type="reaction ID" value="UER00711"/>
</dbReference>
<dbReference type="Proteomes" id="UP000000576">
    <property type="component" value="Chromosome"/>
</dbReference>
<dbReference type="GO" id="GO:0009317">
    <property type="term" value="C:acetyl-CoA carboxylase complex"/>
    <property type="evidence" value="ECO:0007669"/>
    <property type="project" value="InterPro"/>
</dbReference>
<dbReference type="GO" id="GO:0003989">
    <property type="term" value="F:acetyl-CoA carboxylase activity"/>
    <property type="evidence" value="ECO:0007669"/>
    <property type="project" value="InterPro"/>
</dbReference>
<dbReference type="GO" id="GO:0005524">
    <property type="term" value="F:ATP binding"/>
    <property type="evidence" value="ECO:0007669"/>
    <property type="project" value="UniProtKB-KW"/>
</dbReference>
<dbReference type="GO" id="GO:0016743">
    <property type="term" value="F:carboxyl- or carbamoyltransferase activity"/>
    <property type="evidence" value="ECO:0007669"/>
    <property type="project" value="UniProtKB-UniRule"/>
</dbReference>
<dbReference type="GO" id="GO:0006633">
    <property type="term" value="P:fatty acid biosynthetic process"/>
    <property type="evidence" value="ECO:0007669"/>
    <property type="project" value="UniProtKB-KW"/>
</dbReference>
<dbReference type="GO" id="GO:2001295">
    <property type="term" value="P:malonyl-CoA biosynthetic process"/>
    <property type="evidence" value="ECO:0007669"/>
    <property type="project" value="UniProtKB-UniRule"/>
</dbReference>
<dbReference type="FunFam" id="3.90.226.10:FF:000008">
    <property type="entry name" value="Acetyl-coenzyme A carboxylase carboxyl transferase subunit alpha"/>
    <property type="match status" value="1"/>
</dbReference>
<dbReference type="Gene3D" id="3.90.226.10">
    <property type="entry name" value="2-enoyl-CoA Hydratase, Chain A, domain 1"/>
    <property type="match status" value="1"/>
</dbReference>
<dbReference type="HAMAP" id="MF_00823">
    <property type="entry name" value="AcetylCoA_CT_alpha"/>
    <property type="match status" value="1"/>
</dbReference>
<dbReference type="InterPro" id="IPR001095">
    <property type="entry name" value="Acetyl_CoA_COase_a_su"/>
</dbReference>
<dbReference type="InterPro" id="IPR029045">
    <property type="entry name" value="ClpP/crotonase-like_dom_sf"/>
</dbReference>
<dbReference type="InterPro" id="IPR011763">
    <property type="entry name" value="COA_CT_C"/>
</dbReference>
<dbReference type="NCBIfam" id="TIGR00513">
    <property type="entry name" value="accA"/>
    <property type="match status" value="1"/>
</dbReference>
<dbReference type="NCBIfam" id="NF041504">
    <property type="entry name" value="AccA_sub"/>
    <property type="match status" value="1"/>
</dbReference>
<dbReference type="NCBIfam" id="NF004344">
    <property type="entry name" value="PRK05724.1"/>
    <property type="match status" value="1"/>
</dbReference>
<dbReference type="PANTHER" id="PTHR42853">
    <property type="entry name" value="ACETYL-COENZYME A CARBOXYLASE CARBOXYL TRANSFERASE SUBUNIT ALPHA"/>
    <property type="match status" value="1"/>
</dbReference>
<dbReference type="PANTHER" id="PTHR42853:SF3">
    <property type="entry name" value="ACETYL-COENZYME A CARBOXYLASE CARBOXYL TRANSFERASE SUBUNIT ALPHA, CHLOROPLASTIC"/>
    <property type="match status" value="1"/>
</dbReference>
<dbReference type="Pfam" id="PF03255">
    <property type="entry name" value="ACCA"/>
    <property type="match status" value="1"/>
</dbReference>
<dbReference type="PRINTS" id="PR01069">
    <property type="entry name" value="ACCCTRFRASEA"/>
</dbReference>
<dbReference type="SUPFAM" id="SSF52096">
    <property type="entry name" value="ClpP/crotonase"/>
    <property type="match status" value="1"/>
</dbReference>
<dbReference type="PROSITE" id="PS50989">
    <property type="entry name" value="COA_CT_CTER"/>
    <property type="match status" value="1"/>
</dbReference>
<proteinExistence type="inferred from homology"/>
<sequence length="319" mass="35271">MNPNYLDFEQPIADLEAKIQELRKASTGPAVNVETEVRALRDKLRVRTAQIFRDLSAWQVSQLARHPQRPYTLDYINTICDEFHELAGDRAYADDKAIVGGLGRIDGRPVVIIGHQKGRDTKTKVARNFGMPRPEGYRKALRLMKLAERFRLPLLTFIDTPGAYPGIGAEERGQSEAIARNLLEMAELKIPVICTVIGEGGSGGALAIGVGDRTLMLEYGTYSVISPEGCASILWKDAAKAKDAAEQLGLTAKRLKGLGLVDKVIREPTGGAHRNPEQMGKRLKAVLLNELDALEKIPVDTLLQQRYERLRSYGAYEGH</sequence>
<evidence type="ECO:0000255" key="1">
    <source>
        <dbReference type="HAMAP-Rule" id="MF_00823"/>
    </source>
</evidence>
<evidence type="ECO:0000255" key="2">
    <source>
        <dbReference type="PROSITE-ProRule" id="PRU01137"/>
    </source>
</evidence>
<feature type="chain" id="PRO_0000223854" description="Acetyl-coenzyme A carboxylase carboxyl transferase subunit alpha">
    <location>
        <begin position="1"/>
        <end position="319"/>
    </location>
</feature>
<feature type="domain" description="CoA carboxyltransferase C-terminal" evidence="2">
    <location>
        <begin position="32"/>
        <end position="293"/>
    </location>
</feature>
<accession>Q8PMM1</accession>
<comment type="function">
    <text evidence="1">Component of the acetyl coenzyme A carboxylase (ACC) complex. First, biotin carboxylase catalyzes the carboxylation of biotin on its carrier protein (BCCP) and then the CO(2) group is transferred by the carboxyltransferase to acetyl-CoA to form malonyl-CoA.</text>
</comment>
<comment type="catalytic activity">
    <reaction evidence="1">
        <text>N(6)-carboxybiotinyl-L-lysyl-[protein] + acetyl-CoA = N(6)-biotinyl-L-lysyl-[protein] + malonyl-CoA</text>
        <dbReference type="Rhea" id="RHEA:54728"/>
        <dbReference type="Rhea" id="RHEA-COMP:10505"/>
        <dbReference type="Rhea" id="RHEA-COMP:10506"/>
        <dbReference type="ChEBI" id="CHEBI:57288"/>
        <dbReference type="ChEBI" id="CHEBI:57384"/>
        <dbReference type="ChEBI" id="CHEBI:83144"/>
        <dbReference type="ChEBI" id="CHEBI:83145"/>
        <dbReference type="EC" id="2.1.3.15"/>
    </reaction>
</comment>
<comment type="pathway">
    <text evidence="1">Lipid metabolism; malonyl-CoA biosynthesis; malonyl-CoA from acetyl-CoA: step 1/1.</text>
</comment>
<comment type="subunit">
    <text evidence="1">Acetyl-CoA carboxylase is a heterohexamer composed of biotin carboxyl carrier protein (AccB), biotin carboxylase (AccC) and two subunits each of ACCase subunit alpha (AccA) and ACCase subunit beta (AccD).</text>
</comment>
<comment type="subcellular location">
    <subcellularLocation>
        <location evidence="1">Cytoplasm</location>
    </subcellularLocation>
</comment>
<comment type="similarity">
    <text evidence="1">Belongs to the AccA family.</text>
</comment>
<gene>
    <name evidence="1" type="primary">accA</name>
    <name type="ordered locus">XAC1405</name>
</gene>